<reference key="1">
    <citation type="journal article" date="1995" name="Science">
        <title>The minimal gene complement of Mycoplasma genitalium.</title>
        <authorList>
            <person name="Fraser C.M."/>
            <person name="Gocayne J.D."/>
            <person name="White O."/>
            <person name="Adams M.D."/>
            <person name="Clayton R.A."/>
            <person name="Fleischmann R.D."/>
            <person name="Bult C.J."/>
            <person name="Kerlavage A.R."/>
            <person name="Sutton G.G."/>
            <person name="Kelley J.M."/>
            <person name="Fritchman J.L."/>
            <person name="Weidman J.F."/>
            <person name="Small K.V."/>
            <person name="Sandusky M."/>
            <person name="Fuhrmann J.L."/>
            <person name="Nguyen D.T."/>
            <person name="Utterback T.R."/>
            <person name="Saudek D.M."/>
            <person name="Phillips C.A."/>
            <person name="Merrick J.M."/>
            <person name="Tomb J.-F."/>
            <person name="Dougherty B.A."/>
            <person name="Bott K.F."/>
            <person name="Hu P.-C."/>
            <person name="Lucier T.S."/>
            <person name="Peterson S.N."/>
            <person name="Smith H.O."/>
            <person name="Hutchison C.A. III"/>
            <person name="Venter J.C."/>
        </authorList>
    </citation>
    <scope>NUCLEOTIDE SEQUENCE [LARGE SCALE GENOMIC DNA]</scope>
    <source>
        <strain>ATCC 33530 / DSM 19775 / NCTC 10195 / G37</strain>
    </source>
</reference>
<reference key="2">
    <citation type="journal article" date="1993" name="J. Bacteriol.">
        <title>A survey of the Mycoplasma genitalium genome by using random sequencing.</title>
        <authorList>
            <person name="Peterson S.N."/>
            <person name="Hu P.-C."/>
            <person name="Bott K.F."/>
            <person name="Hutchison C.A. III"/>
        </authorList>
    </citation>
    <scope>NUCLEOTIDE SEQUENCE [GENOMIC DNA] OF 136-211</scope>
    <source>
        <strain>ATCC 33530 / DSM 19775 / NCTC 10195 / G37</strain>
    </source>
</reference>
<gene>
    <name type="primary">pstA</name>
    <name type="ordered locus">MG411</name>
</gene>
<feature type="chain" id="PRO_0000060204" description="Phosphate transport system permease protein PstA homolog">
    <location>
        <begin position="1"/>
        <end position="654"/>
    </location>
</feature>
<feature type="transmembrane region" description="Helical" evidence="2">
    <location>
        <begin position="22"/>
        <end position="42"/>
    </location>
</feature>
<feature type="transmembrane region" description="Helical" evidence="2">
    <location>
        <begin position="64"/>
        <end position="84"/>
    </location>
</feature>
<feature type="transmembrane region" description="Helical" evidence="2">
    <location>
        <begin position="113"/>
        <end position="133"/>
    </location>
</feature>
<feature type="transmembrane region" description="Helical" evidence="2">
    <location>
        <begin position="143"/>
        <end position="163"/>
    </location>
</feature>
<feature type="transmembrane region" description="Helical" evidence="2">
    <location>
        <begin position="266"/>
        <end position="286"/>
    </location>
</feature>
<feature type="transmembrane region" description="Helical" evidence="2">
    <location>
        <begin position="303"/>
        <end position="323"/>
    </location>
</feature>
<feature type="transmembrane region" description="Helical" evidence="2">
    <location>
        <begin position="368"/>
        <end position="388"/>
    </location>
</feature>
<feature type="transmembrane region" description="Helical" evidence="2">
    <location>
        <begin position="417"/>
        <end position="437"/>
    </location>
</feature>
<feature type="transmembrane region" description="Helical" evidence="2">
    <location>
        <begin position="453"/>
        <end position="473"/>
    </location>
</feature>
<feature type="transmembrane region" description="Helical" evidence="2">
    <location>
        <begin position="486"/>
        <end position="506"/>
    </location>
</feature>
<feature type="transmembrane region" description="Helical" evidence="2">
    <location>
        <begin position="535"/>
        <end position="555"/>
    </location>
</feature>
<feature type="transmembrane region" description="Helical" evidence="2">
    <location>
        <begin position="613"/>
        <end position="633"/>
    </location>
</feature>
<feature type="domain" description="ABC transmembrane type-1 1" evidence="2">
    <location>
        <begin position="70"/>
        <end position="285"/>
    </location>
</feature>
<feature type="domain" description="ABC transmembrane type-1 2" evidence="2">
    <location>
        <begin position="413"/>
        <end position="623"/>
    </location>
</feature>
<organism>
    <name type="scientific">Mycoplasma genitalium (strain ATCC 33530 / DSM 19775 / NCTC 10195 / G37)</name>
    <name type="common">Mycoplasmoides genitalium</name>
    <dbReference type="NCBI Taxonomy" id="243273"/>
    <lineage>
        <taxon>Bacteria</taxon>
        <taxon>Bacillati</taxon>
        <taxon>Mycoplasmatota</taxon>
        <taxon>Mycoplasmoidales</taxon>
        <taxon>Mycoplasmoidaceae</taxon>
        <taxon>Mycoplasmoides</taxon>
    </lineage>
</organism>
<dbReference type="EMBL" id="L43967">
    <property type="protein sequence ID" value="AAC71639.1"/>
    <property type="molecule type" value="Genomic_DNA"/>
</dbReference>
<dbReference type="EMBL" id="U01746">
    <property type="protein sequence ID" value="AAD10559.1"/>
    <property type="molecule type" value="Genomic_DNA"/>
</dbReference>
<dbReference type="PIR" id="E64245">
    <property type="entry name" value="E64245"/>
</dbReference>
<dbReference type="RefSeq" id="WP_010869471.1">
    <property type="nucleotide sequence ID" value="NC_000908.2"/>
</dbReference>
<dbReference type="STRING" id="243273.MG_411"/>
<dbReference type="GeneID" id="88282596"/>
<dbReference type="KEGG" id="mge:MG_411"/>
<dbReference type="eggNOG" id="COG0573">
    <property type="taxonomic scope" value="Bacteria"/>
</dbReference>
<dbReference type="eggNOG" id="COG0581">
    <property type="taxonomic scope" value="Bacteria"/>
</dbReference>
<dbReference type="HOGENOM" id="CLU_023674_0_0_14"/>
<dbReference type="InParanoid" id="P47651"/>
<dbReference type="OrthoDB" id="9785113at2"/>
<dbReference type="BioCyc" id="MGEN243273:G1GJ2-508-MONOMER"/>
<dbReference type="Proteomes" id="UP000000807">
    <property type="component" value="Chromosome"/>
</dbReference>
<dbReference type="GO" id="GO:0005886">
    <property type="term" value="C:plasma membrane"/>
    <property type="evidence" value="ECO:0000318"/>
    <property type="project" value="GO_Central"/>
</dbReference>
<dbReference type="GO" id="GO:0005315">
    <property type="term" value="F:phosphate transmembrane transporter activity"/>
    <property type="evidence" value="ECO:0007669"/>
    <property type="project" value="InterPro"/>
</dbReference>
<dbReference type="GO" id="GO:0035435">
    <property type="term" value="P:phosphate ion transmembrane transport"/>
    <property type="evidence" value="ECO:0000318"/>
    <property type="project" value="GO_Central"/>
</dbReference>
<dbReference type="CDD" id="cd06261">
    <property type="entry name" value="TM_PBP2"/>
    <property type="match status" value="2"/>
</dbReference>
<dbReference type="Gene3D" id="1.10.3720.10">
    <property type="entry name" value="MetI-like"/>
    <property type="match status" value="2"/>
</dbReference>
<dbReference type="InterPro" id="IPR000515">
    <property type="entry name" value="MetI-like"/>
</dbReference>
<dbReference type="InterPro" id="IPR035906">
    <property type="entry name" value="MetI-like_sf"/>
</dbReference>
<dbReference type="InterPro" id="IPR005672">
    <property type="entry name" value="Phosphate_PstA"/>
</dbReference>
<dbReference type="InterPro" id="IPR051124">
    <property type="entry name" value="Phosphate_Transport_Permease"/>
</dbReference>
<dbReference type="NCBIfam" id="TIGR00974">
    <property type="entry name" value="3a0107s02c"/>
    <property type="match status" value="1"/>
</dbReference>
<dbReference type="PANTHER" id="PTHR30425">
    <property type="entry name" value="PHOSPHATE TRANSPORT SYSTEM PERMEASE PROTEIN PST"/>
    <property type="match status" value="1"/>
</dbReference>
<dbReference type="PANTHER" id="PTHR30425:SF1">
    <property type="entry name" value="PHOSPHATE TRANSPORT SYSTEM PERMEASE PROTEIN PSTC"/>
    <property type="match status" value="1"/>
</dbReference>
<dbReference type="Pfam" id="PF00528">
    <property type="entry name" value="BPD_transp_1"/>
    <property type="match status" value="2"/>
</dbReference>
<dbReference type="SUPFAM" id="SSF161098">
    <property type="entry name" value="MetI-like"/>
    <property type="match status" value="2"/>
</dbReference>
<dbReference type="PROSITE" id="PS50928">
    <property type="entry name" value="ABC_TM1"/>
    <property type="match status" value="2"/>
</dbReference>
<keyword id="KW-1003">Cell membrane</keyword>
<keyword id="KW-0472">Membrane</keyword>
<keyword id="KW-0592">Phosphate transport</keyword>
<keyword id="KW-1185">Reference proteome</keyword>
<keyword id="KW-0677">Repeat</keyword>
<keyword id="KW-0812">Transmembrane</keyword>
<keyword id="KW-1133">Transmembrane helix</keyword>
<keyword id="KW-0813">Transport</keyword>
<accession>P47651</accession>
<sequence>MQKKIKKRLKKENLLRIFSKTLAFLFLVLFISFFVFLLTEATKIGPDFAKSLFNLEFNLGNKQAGIWFPLLVSFIVSIGALIIASYIGVRTSFFLVYRCKPKIRKKLSLIIDILSGIPSVIFGLFASQILSIFFRDILKLPPLSLLNVIAMLSFMIIPIVISLTTNTLTYVNNDLISVVVSLGENKTSAIYKIIKKEIKPQLTVILTLAFARAISETMAVNFVLQSVNYQEVINNNRFFTSDLKTLGSVISTFIFSENGDEQINGVLYIFGIIILILVSLLNFFAIWSANPKTLERYPFLKKISNFIYQVVWFIPNNISALFVDLTSTRQSVKKIKVNNINERSLFFKERLQSVVWIKLNYFLKIFQELICTFLAFGFVLAILLFVFINGSVAINNNGSTVFSFEADSTGRALVNTLVIILITITITFPLALLIAIWLNEYNNSKVVKNVFNFVIDSLSSMPSIIYGLFGLSFFLRVLQLSAGGANGTSLIAGILTISVVILLFLIRTCQQALNNVSWDLRISAFALGISKREVIFKIVLPSALKGLIVALILSINRIIAETAPFFITSGLSSSNLFHLSLPGQTLTTRIYGQLFSINSNAISVMLETSLVSVVFLILLIFFSSYLIPSLFLLNKQKWLVIKSKFQSFKLWKRT</sequence>
<comment type="function">
    <text evidence="1">Could be part of a binding-protein-dependent transport system for phosphate; probably responsible for the translocation of the substrate across the membrane.</text>
</comment>
<comment type="subcellular location">
    <subcellularLocation>
        <location evidence="3">Cell membrane</location>
        <topology evidence="2">Multi-pass membrane protein</topology>
    </subcellularLocation>
</comment>
<comment type="similarity">
    <text evidence="3">Belongs to the binding-protein-dependent transport system permease family. CysTW subfamily.</text>
</comment>
<evidence type="ECO:0000250" key="1"/>
<evidence type="ECO:0000255" key="2">
    <source>
        <dbReference type="PROSITE-ProRule" id="PRU00441"/>
    </source>
</evidence>
<evidence type="ECO:0000305" key="3"/>
<proteinExistence type="inferred from homology"/>
<name>PSTA_MYCGE</name>
<protein>
    <recommendedName>
        <fullName>Phosphate transport system permease protein PstA homolog</fullName>
    </recommendedName>
</protein>